<gene>
    <name evidence="1" type="primary">dtd</name>
    <name type="ordered locus">SZO_01920</name>
</gene>
<name>DTD_STRS7</name>
<keyword id="KW-0963">Cytoplasm</keyword>
<keyword id="KW-0378">Hydrolase</keyword>
<keyword id="KW-0694">RNA-binding</keyword>
<keyword id="KW-0820">tRNA-binding</keyword>
<feature type="chain" id="PRO_1000211737" description="D-aminoacyl-tRNA deacylase">
    <location>
        <begin position="1"/>
        <end position="147"/>
    </location>
</feature>
<feature type="short sequence motif" description="Gly-cisPro motif, important for rejection of L-amino acids" evidence="1">
    <location>
        <begin position="136"/>
        <end position="137"/>
    </location>
</feature>
<dbReference type="EC" id="3.1.1.96" evidence="1"/>
<dbReference type="EMBL" id="FM204884">
    <property type="protein sequence ID" value="CAW97907.1"/>
    <property type="molecule type" value="Genomic_DNA"/>
</dbReference>
<dbReference type="SMR" id="C0MF91"/>
<dbReference type="KEGG" id="seq:SZO_01920"/>
<dbReference type="eggNOG" id="COG1490">
    <property type="taxonomic scope" value="Bacteria"/>
</dbReference>
<dbReference type="HOGENOM" id="CLU_076901_1_0_9"/>
<dbReference type="Proteomes" id="UP000001368">
    <property type="component" value="Chromosome"/>
</dbReference>
<dbReference type="GO" id="GO:0005737">
    <property type="term" value="C:cytoplasm"/>
    <property type="evidence" value="ECO:0007669"/>
    <property type="project" value="UniProtKB-SubCell"/>
</dbReference>
<dbReference type="GO" id="GO:0051500">
    <property type="term" value="F:D-tyrosyl-tRNA(Tyr) deacylase activity"/>
    <property type="evidence" value="ECO:0007669"/>
    <property type="project" value="TreeGrafter"/>
</dbReference>
<dbReference type="GO" id="GO:0106026">
    <property type="term" value="F:Gly-tRNA(Ala) deacylase activity"/>
    <property type="evidence" value="ECO:0007669"/>
    <property type="project" value="UniProtKB-UniRule"/>
</dbReference>
<dbReference type="GO" id="GO:0043908">
    <property type="term" value="F:Ser(Gly)-tRNA(Ala) hydrolase activity"/>
    <property type="evidence" value="ECO:0007669"/>
    <property type="project" value="UniProtKB-UniRule"/>
</dbReference>
<dbReference type="GO" id="GO:0000049">
    <property type="term" value="F:tRNA binding"/>
    <property type="evidence" value="ECO:0007669"/>
    <property type="project" value="UniProtKB-UniRule"/>
</dbReference>
<dbReference type="GO" id="GO:0019478">
    <property type="term" value="P:D-amino acid catabolic process"/>
    <property type="evidence" value="ECO:0007669"/>
    <property type="project" value="UniProtKB-UniRule"/>
</dbReference>
<dbReference type="CDD" id="cd00563">
    <property type="entry name" value="Dtyr_deacylase"/>
    <property type="match status" value="1"/>
</dbReference>
<dbReference type="FunFam" id="3.50.80.10:FF:000001">
    <property type="entry name" value="D-aminoacyl-tRNA deacylase"/>
    <property type="match status" value="1"/>
</dbReference>
<dbReference type="Gene3D" id="3.50.80.10">
    <property type="entry name" value="D-tyrosyl-tRNA(Tyr) deacylase"/>
    <property type="match status" value="1"/>
</dbReference>
<dbReference type="HAMAP" id="MF_00518">
    <property type="entry name" value="Deacylase_Dtd"/>
    <property type="match status" value="1"/>
</dbReference>
<dbReference type="InterPro" id="IPR003732">
    <property type="entry name" value="Daa-tRNA_deacyls_DTD"/>
</dbReference>
<dbReference type="InterPro" id="IPR023509">
    <property type="entry name" value="DTD-like_sf"/>
</dbReference>
<dbReference type="NCBIfam" id="TIGR00256">
    <property type="entry name" value="D-aminoacyl-tRNA deacylase"/>
    <property type="match status" value="1"/>
</dbReference>
<dbReference type="PANTHER" id="PTHR10472:SF5">
    <property type="entry name" value="D-AMINOACYL-TRNA DEACYLASE 1"/>
    <property type="match status" value="1"/>
</dbReference>
<dbReference type="PANTHER" id="PTHR10472">
    <property type="entry name" value="D-TYROSYL-TRNA TYR DEACYLASE"/>
    <property type="match status" value="1"/>
</dbReference>
<dbReference type="Pfam" id="PF02580">
    <property type="entry name" value="Tyr_Deacylase"/>
    <property type="match status" value="1"/>
</dbReference>
<dbReference type="SUPFAM" id="SSF69500">
    <property type="entry name" value="DTD-like"/>
    <property type="match status" value="1"/>
</dbReference>
<sequence>MKIVIQRVKEASVSIDGEIAGAIDQGLLLLVGIGPDDQAEDIDYAVRKISHMRIFSDPEGKMNLSIQDIGGSVLSVSQFTLYADTKKGNRPAFTGAAKPAMASELYDTFNAQLEQLVPVQRGVFGADMQISLTNDGPVTIILDTKHR</sequence>
<proteinExistence type="inferred from homology"/>
<comment type="function">
    <text evidence="1">An aminoacyl-tRNA editing enzyme that deacylates mischarged D-aminoacyl-tRNAs. Also deacylates mischarged glycyl-tRNA(Ala), protecting cells against glycine mischarging by AlaRS. Acts via tRNA-based rather than protein-based catalysis; rejects L-amino acids rather than detecting D-amino acids in the active site. By recycling D-aminoacyl-tRNA to D-amino acids and free tRNA molecules, this enzyme counteracts the toxicity associated with the formation of D-aminoacyl-tRNA entities in vivo and helps enforce protein L-homochirality.</text>
</comment>
<comment type="catalytic activity">
    <reaction evidence="1">
        <text>glycyl-tRNA(Ala) + H2O = tRNA(Ala) + glycine + H(+)</text>
        <dbReference type="Rhea" id="RHEA:53744"/>
        <dbReference type="Rhea" id="RHEA-COMP:9657"/>
        <dbReference type="Rhea" id="RHEA-COMP:13640"/>
        <dbReference type="ChEBI" id="CHEBI:15377"/>
        <dbReference type="ChEBI" id="CHEBI:15378"/>
        <dbReference type="ChEBI" id="CHEBI:57305"/>
        <dbReference type="ChEBI" id="CHEBI:78442"/>
        <dbReference type="ChEBI" id="CHEBI:78522"/>
        <dbReference type="EC" id="3.1.1.96"/>
    </reaction>
</comment>
<comment type="catalytic activity">
    <reaction evidence="1">
        <text>a D-aminoacyl-tRNA + H2O = a tRNA + a D-alpha-amino acid + H(+)</text>
        <dbReference type="Rhea" id="RHEA:13953"/>
        <dbReference type="Rhea" id="RHEA-COMP:10123"/>
        <dbReference type="Rhea" id="RHEA-COMP:10124"/>
        <dbReference type="ChEBI" id="CHEBI:15377"/>
        <dbReference type="ChEBI" id="CHEBI:15378"/>
        <dbReference type="ChEBI" id="CHEBI:59871"/>
        <dbReference type="ChEBI" id="CHEBI:78442"/>
        <dbReference type="ChEBI" id="CHEBI:79333"/>
        <dbReference type="EC" id="3.1.1.96"/>
    </reaction>
</comment>
<comment type="subunit">
    <text evidence="1">Homodimer.</text>
</comment>
<comment type="subcellular location">
    <subcellularLocation>
        <location evidence="1">Cytoplasm</location>
    </subcellularLocation>
</comment>
<comment type="domain">
    <text evidence="1">A Gly-cisPro motif from one monomer fits into the active site of the other monomer to allow specific chiral rejection of L-amino acids.</text>
</comment>
<comment type="similarity">
    <text evidence="1">Belongs to the DTD family.</text>
</comment>
<organism>
    <name type="scientific">Streptococcus equi subsp. zooepidemicus (strain H70)</name>
    <dbReference type="NCBI Taxonomy" id="553483"/>
    <lineage>
        <taxon>Bacteria</taxon>
        <taxon>Bacillati</taxon>
        <taxon>Bacillota</taxon>
        <taxon>Bacilli</taxon>
        <taxon>Lactobacillales</taxon>
        <taxon>Streptococcaceae</taxon>
        <taxon>Streptococcus</taxon>
    </lineage>
</organism>
<accession>C0MF91</accession>
<reference key="1">
    <citation type="journal article" date="2009" name="PLoS Pathog.">
        <title>Genomic evidence for the evolution of Streptococcus equi: host restriction, increased virulence, and genetic exchange with human pathogens.</title>
        <authorList>
            <person name="Holden M.T.G."/>
            <person name="Heather Z."/>
            <person name="Paillot R."/>
            <person name="Steward K.F."/>
            <person name="Webb K."/>
            <person name="Ainslie F."/>
            <person name="Jourdan T."/>
            <person name="Bason N.C."/>
            <person name="Holroyd N.E."/>
            <person name="Mungall K."/>
            <person name="Quail M.A."/>
            <person name="Sanders M."/>
            <person name="Simmonds M."/>
            <person name="Willey D."/>
            <person name="Brooks K."/>
            <person name="Aanensen D.M."/>
            <person name="Spratt B.G."/>
            <person name="Jolley K.A."/>
            <person name="Maiden M.C.J."/>
            <person name="Kehoe M."/>
            <person name="Chanter N."/>
            <person name="Bentley S.D."/>
            <person name="Robinson C."/>
            <person name="Maskell D.J."/>
            <person name="Parkhill J."/>
            <person name="Waller A.S."/>
        </authorList>
    </citation>
    <scope>NUCLEOTIDE SEQUENCE [LARGE SCALE GENOMIC DNA]</scope>
    <source>
        <strain>H70</strain>
    </source>
</reference>
<protein>
    <recommendedName>
        <fullName evidence="1">D-aminoacyl-tRNA deacylase</fullName>
        <shortName evidence="1">DTD</shortName>
        <ecNumber evidence="1">3.1.1.96</ecNumber>
    </recommendedName>
    <alternativeName>
        <fullName evidence="1">Gly-tRNA(Ala) deacylase</fullName>
    </alternativeName>
</protein>
<evidence type="ECO:0000255" key="1">
    <source>
        <dbReference type="HAMAP-Rule" id="MF_00518"/>
    </source>
</evidence>